<gene>
    <name evidence="1" type="primary">mnmG</name>
    <name evidence="1" type="synonym">gidA</name>
    <name type="ordered locus">AFE_3214</name>
</gene>
<sequence>MQNSFDVIVVGGGHAGTEAAAAAARLGVRTLLLTQNLDTIGQMSCNPAIGGIGKGHLVKEVDALGGIMALAIDQAGIQFRTLNASKGPAVRATRAQADRSLYKRAVRRLLEDIPALQLFQGMVGDLLMEGDRLGGVILETGLVLRAAQVVLTTGTFLGGRVHMGDQNYPAGRAGDPPSNALAQRLREMAFPVARLKTGTPPRIDGRSIDYGVLEAQPGDAPPPAFSFMTRRIGVPQLACHITHTNARTHEIIQTNLHQSAMYGGHIQSVGPRYCPSIEDKVVRFADKASHQVFLEPEGLDTHEVYPNGISTSLPFGVQIELVRSMRGLENAVLLRPGYAIEYDYLDPRELHPSLESRRLPGLFCAGQINGTTGYEEAAAQGLLAGLNAARRARELAAWTPGRHEAYLGVMVDDLVTRGLDEPYRMFTSRAEYRLQLREDNADLRLTPHGRALGLVDDQRWTAFSAKQDAVQAERNRLEGLRIHPGSAIAGRIAAKTDQPLSRDVTALELLRRPDWDYASLLQVLDLVPCSDAQACEQLEIECKYAGYVARQHDEITRAARWEGTDIPADMDYAAVRGLSTEVMQRLARQRPQTIGLASRIPGVTPAAVSLLLIHVKRRGLRQAG</sequence>
<accession>B7JB95</accession>
<protein>
    <recommendedName>
        <fullName evidence="1">tRNA uridine 5-carboxymethylaminomethyl modification enzyme MnmG</fullName>
    </recommendedName>
    <alternativeName>
        <fullName evidence="1">Glucose-inhibited division protein A</fullName>
    </alternativeName>
</protein>
<feature type="chain" id="PRO_1000122738" description="tRNA uridine 5-carboxymethylaminomethyl modification enzyme MnmG">
    <location>
        <begin position="1"/>
        <end position="624"/>
    </location>
</feature>
<feature type="binding site" evidence="1">
    <location>
        <begin position="11"/>
        <end position="16"/>
    </location>
    <ligand>
        <name>FAD</name>
        <dbReference type="ChEBI" id="CHEBI:57692"/>
    </ligand>
</feature>
<feature type="binding site" evidence="1">
    <location>
        <position position="123"/>
    </location>
    <ligand>
        <name>FAD</name>
        <dbReference type="ChEBI" id="CHEBI:57692"/>
    </ligand>
</feature>
<feature type="binding site" evidence="1">
    <location>
        <position position="178"/>
    </location>
    <ligand>
        <name>FAD</name>
        <dbReference type="ChEBI" id="CHEBI:57692"/>
    </ligand>
</feature>
<feature type="binding site" evidence="1">
    <location>
        <begin position="270"/>
        <end position="284"/>
    </location>
    <ligand>
        <name>NAD(+)</name>
        <dbReference type="ChEBI" id="CHEBI:57540"/>
    </ligand>
</feature>
<feature type="binding site" evidence="1">
    <location>
        <position position="367"/>
    </location>
    <ligand>
        <name>FAD</name>
        <dbReference type="ChEBI" id="CHEBI:57692"/>
    </ligand>
</feature>
<organism>
    <name type="scientific">Acidithiobacillus ferrooxidans (strain ATCC 23270 / DSM 14882 / CIP 104768 / NCIMB 8455)</name>
    <name type="common">Ferrobacillus ferrooxidans (strain ATCC 23270)</name>
    <dbReference type="NCBI Taxonomy" id="243159"/>
    <lineage>
        <taxon>Bacteria</taxon>
        <taxon>Pseudomonadati</taxon>
        <taxon>Pseudomonadota</taxon>
        <taxon>Acidithiobacillia</taxon>
        <taxon>Acidithiobacillales</taxon>
        <taxon>Acidithiobacillaceae</taxon>
        <taxon>Acidithiobacillus</taxon>
    </lineage>
</organism>
<name>MNMG_ACIF2</name>
<dbReference type="EMBL" id="CP001219">
    <property type="protein sequence ID" value="ACK80867.1"/>
    <property type="molecule type" value="Genomic_DNA"/>
</dbReference>
<dbReference type="RefSeq" id="WP_012537662.1">
    <property type="nucleotide sequence ID" value="NC_011761.1"/>
</dbReference>
<dbReference type="SMR" id="B7JB95"/>
<dbReference type="STRING" id="243159.AFE_3214"/>
<dbReference type="PaxDb" id="243159-AFE_3214"/>
<dbReference type="GeneID" id="65282198"/>
<dbReference type="KEGG" id="afr:AFE_3214"/>
<dbReference type="eggNOG" id="COG0445">
    <property type="taxonomic scope" value="Bacteria"/>
</dbReference>
<dbReference type="HOGENOM" id="CLU_007831_2_2_6"/>
<dbReference type="Proteomes" id="UP000001362">
    <property type="component" value="Chromosome"/>
</dbReference>
<dbReference type="GO" id="GO:0005829">
    <property type="term" value="C:cytosol"/>
    <property type="evidence" value="ECO:0007669"/>
    <property type="project" value="TreeGrafter"/>
</dbReference>
<dbReference type="GO" id="GO:0050660">
    <property type="term" value="F:flavin adenine dinucleotide binding"/>
    <property type="evidence" value="ECO:0007669"/>
    <property type="project" value="UniProtKB-UniRule"/>
</dbReference>
<dbReference type="GO" id="GO:0030488">
    <property type="term" value="P:tRNA methylation"/>
    <property type="evidence" value="ECO:0007669"/>
    <property type="project" value="TreeGrafter"/>
</dbReference>
<dbReference type="GO" id="GO:0002098">
    <property type="term" value="P:tRNA wobble uridine modification"/>
    <property type="evidence" value="ECO:0007669"/>
    <property type="project" value="InterPro"/>
</dbReference>
<dbReference type="FunFam" id="1.10.10.1800:FF:000001">
    <property type="entry name" value="tRNA uridine 5-carboxymethylaminomethyl modification enzyme MnmG"/>
    <property type="match status" value="1"/>
</dbReference>
<dbReference type="FunFam" id="1.10.150.570:FF:000001">
    <property type="entry name" value="tRNA uridine 5-carboxymethylaminomethyl modification enzyme MnmG"/>
    <property type="match status" value="1"/>
</dbReference>
<dbReference type="FunFam" id="3.50.50.60:FF:000002">
    <property type="entry name" value="tRNA uridine 5-carboxymethylaminomethyl modification enzyme MnmG"/>
    <property type="match status" value="1"/>
</dbReference>
<dbReference type="FunFam" id="3.50.50.60:FF:000010">
    <property type="entry name" value="tRNA uridine 5-carboxymethylaminomethyl modification enzyme MnmG"/>
    <property type="match status" value="1"/>
</dbReference>
<dbReference type="Gene3D" id="3.50.50.60">
    <property type="entry name" value="FAD/NAD(P)-binding domain"/>
    <property type="match status" value="2"/>
</dbReference>
<dbReference type="Gene3D" id="1.10.150.570">
    <property type="entry name" value="GidA associated domain, C-terminal subdomain"/>
    <property type="match status" value="1"/>
</dbReference>
<dbReference type="Gene3D" id="1.10.10.1800">
    <property type="entry name" value="tRNA uridine 5-carboxymethylaminomethyl modification enzyme MnmG/GidA"/>
    <property type="match status" value="1"/>
</dbReference>
<dbReference type="HAMAP" id="MF_00129">
    <property type="entry name" value="MnmG_GidA"/>
    <property type="match status" value="1"/>
</dbReference>
<dbReference type="InterPro" id="IPR036188">
    <property type="entry name" value="FAD/NAD-bd_sf"/>
</dbReference>
<dbReference type="InterPro" id="IPR049312">
    <property type="entry name" value="GIDA_C_N"/>
</dbReference>
<dbReference type="InterPro" id="IPR004416">
    <property type="entry name" value="MnmG"/>
</dbReference>
<dbReference type="InterPro" id="IPR002218">
    <property type="entry name" value="MnmG-rel"/>
</dbReference>
<dbReference type="InterPro" id="IPR020595">
    <property type="entry name" value="MnmG-rel_CS"/>
</dbReference>
<dbReference type="InterPro" id="IPR026904">
    <property type="entry name" value="MnmG_C"/>
</dbReference>
<dbReference type="InterPro" id="IPR047001">
    <property type="entry name" value="MnmG_C_subdom"/>
</dbReference>
<dbReference type="InterPro" id="IPR044920">
    <property type="entry name" value="MnmG_C_subdom_sf"/>
</dbReference>
<dbReference type="InterPro" id="IPR040131">
    <property type="entry name" value="MnmG_N"/>
</dbReference>
<dbReference type="NCBIfam" id="TIGR00136">
    <property type="entry name" value="mnmG_gidA"/>
    <property type="match status" value="1"/>
</dbReference>
<dbReference type="PANTHER" id="PTHR11806">
    <property type="entry name" value="GLUCOSE INHIBITED DIVISION PROTEIN A"/>
    <property type="match status" value="1"/>
</dbReference>
<dbReference type="PANTHER" id="PTHR11806:SF0">
    <property type="entry name" value="PROTEIN MTO1 HOMOLOG, MITOCHONDRIAL"/>
    <property type="match status" value="1"/>
</dbReference>
<dbReference type="Pfam" id="PF01134">
    <property type="entry name" value="GIDA"/>
    <property type="match status" value="1"/>
</dbReference>
<dbReference type="Pfam" id="PF21680">
    <property type="entry name" value="GIDA_C_1st"/>
    <property type="match status" value="1"/>
</dbReference>
<dbReference type="Pfam" id="PF13932">
    <property type="entry name" value="SAM_GIDA_C"/>
    <property type="match status" value="1"/>
</dbReference>
<dbReference type="SMART" id="SM01228">
    <property type="entry name" value="GIDA_assoc_3"/>
    <property type="match status" value="1"/>
</dbReference>
<dbReference type="SUPFAM" id="SSF51905">
    <property type="entry name" value="FAD/NAD(P)-binding domain"/>
    <property type="match status" value="1"/>
</dbReference>
<dbReference type="PROSITE" id="PS01280">
    <property type="entry name" value="GIDA_1"/>
    <property type="match status" value="1"/>
</dbReference>
<dbReference type="PROSITE" id="PS01281">
    <property type="entry name" value="GIDA_2"/>
    <property type="match status" value="1"/>
</dbReference>
<comment type="function">
    <text evidence="1">NAD-binding protein involved in the addition of a carboxymethylaminomethyl (cmnm) group at the wobble position (U34) of certain tRNAs, forming tRNA-cmnm(5)s(2)U34.</text>
</comment>
<comment type="cofactor">
    <cofactor evidence="1">
        <name>FAD</name>
        <dbReference type="ChEBI" id="CHEBI:57692"/>
    </cofactor>
</comment>
<comment type="subunit">
    <text evidence="1">Homodimer. Heterotetramer of two MnmE and two MnmG subunits.</text>
</comment>
<comment type="subcellular location">
    <subcellularLocation>
        <location evidence="1">Cytoplasm</location>
    </subcellularLocation>
</comment>
<comment type="similarity">
    <text evidence="1">Belongs to the MnmG family.</text>
</comment>
<evidence type="ECO:0000255" key="1">
    <source>
        <dbReference type="HAMAP-Rule" id="MF_00129"/>
    </source>
</evidence>
<proteinExistence type="inferred from homology"/>
<reference key="1">
    <citation type="journal article" date="2008" name="BMC Genomics">
        <title>Acidithiobacillus ferrooxidans metabolism: from genome sequence to industrial applications.</title>
        <authorList>
            <person name="Valdes J."/>
            <person name="Pedroso I."/>
            <person name="Quatrini R."/>
            <person name="Dodson R.J."/>
            <person name="Tettelin H."/>
            <person name="Blake R. II"/>
            <person name="Eisen J.A."/>
            <person name="Holmes D.S."/>
        </authorList>
    </citation>
    <scope>NUCLEOTIDE SEQUENCE [LARGE SCALE GENOMIC DNA]</scope>
    <source>
        <strain>ATCC 23270 / DSM 14882 / CIP 104768 / NCIMB 8455</strain>
    </source>
</reference>
<keyword id="KW-0963">Cytoplasm</keyword>
<keyword id="KW-0274">FAD</keyword>
<keyword id="KW-0285">Flavoprotein</keyword>
<keyword id="KW-0520">NAD</keyword>
<keyword id="KW-1185">Reference proteome</keyword>
<keyword id="KW-0819">tRNA processing</keyword>